<evidence type="ECO:0000250" key="1">
    <source>
        <dbReference type="UniProtKB" id="Q8NBS3"/>
    </source>
</evidence>
<evidence type="ECO:0000255" key="2"/>
<evidence type="ECO:0000269" key="3">
    <source>
    </source>
</evidence>
<evidence type="ECO:0000269" key="4">
    <source>
    </source>
</evidence>
<evidence type="ECO:0000269" key="5">
    <source>
    </source>
</evidence>
<evidence type="ECO:0000305" key="6"/>
<protein>
    <recommendedName>
        <fullName>Solute carrier family 4 member 11</fullName>
    </recommendedName>
    <alternativeName>
        <fullName>Sodium borate cotransporter 1</fullName>
        <shortName>NaBC1</shortName>
    </alternativeName>
</protein>
<organism>
    <name type="scientific">Mus musculus</name>
    <name type="common">Mouse</name>
    <dbReference type="NCBI Taxonomy" id="10090"/>
    <lineage>
        <taxon>Eukaryota</taxon>
        <taxon>Metazoa</taxon>
        <taxon>Chordata</taxon>
        <taxon>Craniata</taxon>
        <taxon>Vertebrata</taxon>
        <taxon>Euteleostomi</taxon>
        <taxon>Mammalia</taxon>
        <taxon>Eutheria</taxon>
        <taxon>Euarchontoglires</taxon>
        <taxon>Glires</taxon>
        <taxon>Rodentia</taxon>
        <taxon>Myomorpha</taxon>
        <taxon>Muroidea</taxon>
        <taxon>Muridae</taxon>
        <taxon>Murinae</taxon>
        <taxon>Mus</taxon>
        <taxon>Mus</taxon>
    </lineage>
</organism>
<dbReference type="EMBL" id="AL772162">
    <property type="status" value="NOT_ANNOTATED_CDS"/>
    <property type="molecule type" value="Genomic_DNA"/>
</dbReference>
<dbReference type="EMBL" id="BC111884">
    <property type="protein sequence ID" value="AAI11885.1"/>
    <property type="molecule type" value="mRNA"/>
</dbReference>
<dbReference type="EMBL" id="AK141286">
    <property type="protein sequence ID" value="BAE24637.1"/>
    <property type="molecule type" value="mRNA"/>
</dbReference>
<dbReference type="CCDS" id="CCDS38244.1"/>
<dbReference type="RefSeq" id="NP_001074631.1">
    <property type="nucleotide sequence ID" value="NM_001081162.1"/>
</dbReference>
<dbReference type="SMR" id="A2AJN7"/>
<dbReference type="FunCoup" id="A2AJN7">
    <property type="interactions" value="24"/>
</dbReference>
<dbReference type="STRING" id="10090.ENSMUSP00000096963"/>
<dbReference type="GlyCosmos" id="A2AJN7">
    <property type="glycosylation" value="2 sites, No reported glycans"/>
</dbReference>
<dbReference type="GlyGen" id="A2AJN7">
    <property type="glycosylation" value="2 sites"/>
</dbReference>
<dbReference type="iPTMnet" id="A2AJN7"/>
<dbReference type="PhosphoSitePlus" id="A2AJN7"/>
<dbReference type="PaxDb" id="10090-ENSMUSP00000096963"/>
<dbReference type="PeptideAtlas" id="A2AJN7"/>
<dbReference type="ProteomicsDB" id="256825"/>
<dbReference type="Antibodypedia" id="7351">
    <property type="antibodies" value="107 antibodies from 26 providers"/>
</dbReference>
<dbReference type="Ensembl" id="ENSMUST00000099362.11">
    <property type="protein sequence ID" value="ENSMUSP00000096963.5"/>
    <property type="gene ID" value="ENSMUSG00000074796.11"/>
</dbReference>
<dbReference type="GeneID" id="269356"/>
<dbReference type="KEGG" id="mmu:269356"/>
<dbReference type="UCSC" id="uc008mjv.1">
    <property type="organism name" value="mouse"/>
</dbReference>
<dbReference type="AGR" id="MGI:2138987"/>
<dbReference type="CTD" id="83959"/>
<dbReference type="MGI" id="MGI:2138987">
    <property type="gene designation" value="Slc4a11"/>
</dbReference>
<dbReference type="VEuPathDB" id="HostDB:ENSMUSG00000074796"/>
<dbReference type="eggNOG" id="KOG1172">
    <property type="taxonomic scope" value="Eukaryota"/>
</dbReference>
<dbReference type="GeneTree" id="ENSGT00940000154894"/>
<dbReference type="HOGENOM" id="CLU_002289_6_0_1"/>
<dbReference type="InParanoid" id="A2AJN7"/>
<dbReference type="OMA" id="AIFHWIV"/>
<dbReference type="OrthoDB" id="1735926at2759"/>
<dbReference type="PhylomeDB" id="A2AJN7"/>
<dbReference type="TreeFam" id="TF313630"/>
<dbReference type="BioGRID-ORCS" id="269356">
    <property type="hits" value="3 hits in 81 CRISPR screens"/>
</dbReference>
<dbReference type="ChiTaRS" id="Slc4a11">
    <property type="organism name" value="mouse"/>
</dbReference>
<dbReference type="PRO" id="PR:A2AJN7"/>
<dbReference type="Proteomes" id="UP000000589">
    <property type="component" value="Chromosome 2"/>
</dbReference>
<dbReference type="RNAct" id="A2AJN7">
    <property type="molecule type" value="protein"/>
</dbReference>
<dbReference type="Bgee" id="ENSMUSG00000074796">
    <property type="expression patterns" value="Expressed in vestibular membrane of cochlear duct and 84 other cell types or tissues"/>
</dbReference>
<dbReference type="ExpressionAtlas" id="A2AJN7">
    <property type="expression patterns" value="baseline and differential"/>
</dbReference>
<dbReference type="GO" id="GO:0016324">
    <property type="term" value="C:apical plasma membrane"/>
    <property type="evidence" value="ECO:0007669"/>
    <property type="project" value="Ensembl"/>
</dbReference>
<dbReference type="GO" id="GO:0016323">
    <property type="term" value="C:basolateral plasma membrane"/>
    <property type="evidence" value="ECO:0000314"/>
    <property type="project" value="UniProtKB"/>
</dbReference>
<dbReference type="GO" id="GO:0012506">
    <property type="term" value="C:vesicle membrane"/>
    <property type="evidence" value="ECO:0007669"/>
    <property type="project" value="Ensembl"/>
</dbReference>
<dbReference type="GO" id="GO:0046715">
    <property type="term" value="F:active borate transmembrane transporter activity"/>
    <property type="evidence" value="ECO:0007669"/>
    <property type="project" value="Ensembl"/>
</dbReference>
<dbReference type="GO" id="GO:0015106">
    <property type="term" value="F:bicarbonate transmembrane transporter activity"/>
    <property type="evidence" value="ECO:0007669"/>
    <property type="project" value="Ensembl"/>
</dbReference>
<dbReference type="GO" id="GO:0046983">
    <property type="term" value="F:protein dimerization activity"/>
    <property type="evidence" value="ECO:0000250"/>
    <property type="project" value="UniProtKB"/>
</dbReference>
<dbReference type="GO" id="GO:0015252">
    <property type="term" value="F:proton channel activity"/>
    <property type="evidence" value="ECO:0007669"/>
    <property type="project" value="Ensembl"/>
</dbReference>
<dbReference type="GO" id="GO:0015078">
    <property type="term" value="F:proton transmembrane transporter activity"/>
    <property type="evidence" value="ECO:0000250"/>
    <property type="project" value="UniProtKB"/>
</dbReference>
<dbReference type="GO" id="GO:0005272">
    <property type="term" value="F:sodium channel activity"/>
    <property type="evidence" value="ECO:0007669"/>
    <property type="project" value="Ensembl"/>
</dbReference>
<dbReference type="GO" id="GO:0005452">
    <property type="term" value="F:solute:inorganic anion antiporter activity"/>
    <property type="evidence" value="ECO:0007669"/>
    <property type="project" value="InterPro"/>
</dbReference>
<dbReference type="GO" id="GO:0015293">
    <property type="term" value="F:symporter activity"/>
    <property type="evidence" value="ECO:0007669"/>
    <property type="project" value="UniProtKB-KW"/>
</dbReference>
<dbReference type="GO" id="GO:0005372">
    <property type="term" value="F:water transmembrane transporter activity"/>
    <property type="evidence" value="ECO:0000250"/>
    <property type="project" value="UniProtKB"/>
</dbReference>
<dbReference type="GO" id="GO:0071476">
    <property type="term" value="P:cellular hypotonic response"/>
    <property type="evidence" value="ECO:0000250"/>
    <property type="project" value="UniProtKB"/>
</dbReference>
<dbReference type="GO" id="GO:0034599">
    <property type="term" value="P:cellular response to oxidative stress"/>
    <property type="evidence" value="ECO:0000250"/>
    <property type="project" value="UniProtKB"/>
</dbReference>
<dbReference type="GO" id="GO:0042044">
    <property type="term" value="P:fluid transport"/>
    <property type="evidence" value="ECO:0000315"/>
    <property type="project" value="UniProtKB"/>
</dbReference>
<dbReference type="GO" id="GO:0030003">
    <property type="term" value="P:intracellular monoatomic cation homeostasis"/>
    <property type="evidence" value="ECO:0007669"/>
    <property type="project" value="Ensembl"/>
</dbReference>
<dbReference type="GO" id="GO:0006820">
    <property type="term" value="P:monoatomic anion transport"/>
    <property type="evidence" value="ECO:0007669"/>
    <property type="project" value="InterPro"/>
</dbReference>
<dbReference type="GO" id="GO:0050801">
    <property type="term" value="P:monoatomic ion homeostasis"/>
    <property type="evidence" value="ECO:0000315"/>
    <property type="project" value="UniProtKB"/>
</dbReference>
<dbReference type="GO" id="GO:2000739">
    <property type="term" value="P:regulation of mesenchymal stem cell differentiation"/>
    <property type="evidence" value="ECO:0000315"/>
    <property type="project" value="UniProtKB"/>
</dbReference>
<dbReference type="GO" id="GO:0051881">
    <property type="term" value="P:regulation of mitochondrial membrane potential"/>
    <property type="evidence" value="ECO:0000250"/>
    <property type="project" value="UniProtKB"/>
</dbReference>
<dbReference type="FunFam" id="1.10.287.570:FF:000002">
    <property type="entry name" value="Solute carrier family 4 member 11"/>
    <property type="match status" value="1"/>
</dbReference>
<dbReference type="FunFam" id="3.40.930.10:FF:000013">
    <property type="entry name" value="Solute carrier family 4 member 11"/>
    <property type="match status" value="1"/>
</dbReference>
<dbReference type="Gene3D" id="1.10.287.570">
    <property type="entry name" value="Helical hairpin bin"/>
    <property type="match status" value="1"/>
</dbReference>
<dbReference type="Gene3D" id="3.40.930.10">
    <property type="entry name" value="Mannitol-specific EII, Chain A"/>
    <property type="match status" value="1"/>
</dbReference>
<dbReference type="InterPro" id="IPR011531">
    <property type="entry name" value="HCO3_transpt-like_TM_dom"/>
</dbReference>
<dbReference type="InterPro" id="IPR003020">
    <property type="entry name" value="HCO3_transpt_euk"/>
</dbReference>
<dbReference type="InterPro" id="IPR016152">
    <property type="entry name" value="PTrfase/Anion_transptr"/>
</dbReference>
<dbReference type="PANTHER" id="PTHR11453">
    <property type="entry name" value="ANION EXCHANGE PROTEIN"/>
    <property type="match status" value="1"/>
</dbReference>
<dbReference type="PANTHER" id="PTHR11453:SF127">
    <property type="entry name" value="SOLUTE CARRIER FAMILY 4 MEMBER 11"/>
    <property type="match status" value="1"/>
</dbReference>
<dbReference type="Pfam" id="PF00955">
    <property type="entry name" value="HCO3_cotransp"/>
    <property type="match status" value="1"/>
</dbReference>
<dbReference type="PRINTS" id="PR01231">
    <property type="entry name" value="HCO3TRNSPORT"/>
</dbReference>
<dbReference type="SUPFAM" id="SSF55804">
    <property type="entry name" value="Phoshotransferase/anion transport protein"/>
    <property type="match status" value="1"/>
</dbReference>
<feature type="chain" id="PRO_0000352350" description="Solute carrier family 4 member 11">
    <location>
        <begin position="1"/>
        <end position="862"/>
    </location>
</feature>
<feature type="topological domain" description="Cytoplasmic" evidence="1">
    <location>
        <begin position="1"/>
        <end position="343"/>
    </location>
</feature>
<feature type="transmembrane region" description="Helical" evidence="2">
    <location>
        <begin position="344"/>
        <end position="366"/>
    </location>
</feature>
<feature type="topological domain" description="Extracellular" evidence="1">
    <location>
        <begin position="367"/>
        <end position="379"/>
    </location>
</feature>
<feature type="transmembrane region" description="Helical" evidence="2">
    <location>
        <begin position="380"/>
        <end position="393"/>
    </location>
</feature>
<feature type="topological domain" description="Cytoplasmic" evidence="1">
    <location>
        <begin position="394"/>
        <end position="398"/>
    </location>
</feature>
<feature type="transmembrane region" description="Helical" evidence="2">
    <location>
        <begin position="399"/>
        <end position="415"/>
    </location>
</feature>
<feature type="topological domain" description="Extracellular" evidence="1">
    <location>
        <begin position="416"/>
        <end position="428"/>
    </location>
</feature>
<feature type="transmembrane region" description="Helical" evidence="2">
    <location>
        <begin position="429"/>
        <end position="452"/>
    </location>
</feature>
<feature type="topological domain" description="Cytoplasmic" evidence="1">
    <location>
        <begin position="453"/>
        <end position="460"/>
    </location>
</feature>
<feature type="transmembrane region" description="Helical" evidence="2">
    <location>
        <begin position="461"/>
        <end position="481"/>
    </location>
</feature>
<feature type="topological domain" description="Extracellular" evidence="1">
    <location>
        <begin position="482"/>
        <end position="542"/>
    </location>
</feature>
<feature type="transmembrane region" description="Helical" evidence="2">
    <location>
        <begin position="543"/>
        <end position="564"/>
    </location>
</feature>
<feature type="topological domain" description="Cytoplasmic" evidence="1">
    <location>
        <begin position="565"/>
        <end position="577"/>
    </location>
</feature>
<feature type="transmembrane region" description="Helical" evidence="2">
    <location>
        <begin position="578"/>
        <end position="599"/>
    </location>
</feature>
<feature type="topological domain" description="Extracellular" evidence="1">
    <location>
        <begin position="600"/>
        <end position="627"/>
    </location>
</feature>
<feature type="transmembrane region" description="Helical" evidence="2">
    <location>
        <begin position="628"/>
        <end position="645"/>
    </location>
</feature>
<feature type="topological domain" description="Cytoplasmic" evidence="1">
    <location>
        <begin position="646"/>
        <end position="670"/>
    </location>
</feature>
<feature type="transmembrane region" description="Helical" evidence="2">
    <location>
        <begin position="671"/>
        <end position="691"/>
    </location>
</feature>
<feature type="topological domain" description="Extracellular" evidence="1">
    <location>
        <begin position="692"/>
        <end position="721"/>
    </location>
</feature>
<feature type="transmembrane region" description="Helical" evidence="2">
    <location>
        <begin position="722"/>
        <end position="746"/>
    </location>
</feature>
<feature type="topological domain" description="Cytoplasmic" evidence="1">
    <location>
        <begin position="747"/>
        <end position="752"/>
    </location>
</feature>
<feature type="transmembrane region" description="Helical" evidence="2">
    <location>
        <begin position="753"/>
        <end position="770"/>
    </location>
</feature>
<feature type="topological domain" description="Extracellular" evidence="1">
    <location>
        <begin position="771"/>
        <end position="774"/>
    </location>
</feature>
<feature type="transmembrane region" description="Helical" evidence="2">
    <location>
        <begin position="775"/>
        <end position="797"/>
    </location>
</feature>
<feature type="topological domain" description="Cytoplasmic" evidence="1">
    <location>
        <begin position="798"/>
        <end position="802"/>
    </location>
</feature>
<feature type="transmembrane region" description="Helical" evidence="2">
    <location>
        <begin position="803"/>
        <end position="819"/>
    </location>
</feature>
<feature type="topological domain" description="Extracellular" evidence="1">
    <location>
        <begin position="820"/>
        <end position="823"/>
    </location>
</feature>
<feature type="transmembrane region" description="Helical" evidence="2">
    <location>
        <begin position="824"/>
        <end position="844"/>
    </location>
</feature>
<feature type="topological domain" description="Cytoplasmic" evidence="1">
    <location>
        <begin position="845"/>
        <end position="862"/>
    </location>
</feature>
<feature type="glycosylation site" description="N-linked (GlcNAc...) asparagine" evidence="2">
    <location>
        <position position="511"/>
    </location>
</feature>
<feature type="glycosylation site" description="N-linked (GlcNAc...) asparagine" evidence="2">
    <location>
        <position position="519"/>
    </location>
</feature>
<feature type="sequence conflict" description="In Ref. 2; AAI11885." evidence="6" ref="2">
    <original>A</original>
    <variation>T</variation>
    <location>
        <position position="151"/>
    </location>
</feature>
<feature type="sequence conflict" description="In Ref. 2; AAI11885." evidence="6" ref="2">
    <original>A</original>
    <variation>S</variation>
    <location>
        <position position="850"/>
    </location>
</feature>
<accession>A2AJN7</accession>
<accession>Q0VG86</accession>
<accession>Q3URQ1</accession>
<gene>
    <name type="primary">Slc4a11</name>
    <name type="synonym">BTR1</name>
</gene>
<name>S4A11_MOUSE</name>
<reference key="1">
    <citation type="journal article" date="2009" name="PLoS Biol.">
        <title>Lineage-specific biology revealed by a finished genome assembly of the mouse.</title>
        <authorList>
            <person name="Church D.M."/>
            <person name="Goodstadt L."/>
            <person name="Hillier L.W."/>
            <person name="Zody M.C."/>
            <person name="Goldstein S."/>
            <person name="She X."/>
            <person name="Bult C.J."/>
            <person name="Agarwala R."/>
            <person name="Cherry J.L."/>
            <person name="DiCuccio M."/>
            <person name="Hlavina W."/>
            <person name="Kapustin Y."/>
            <person name="Meric P."/>
            <person name="Maglott D."/>
            <person name="Birtle Z."/>
            <person name="Marques A.C."/>
            <person name="Graves T."/>
            <person name="Zhou S."/>
            <person name="Teague B."/>
            <person name="Potamousis K."/>
            <person name="Churas C."/>
            <person name="Place M."/>
            <person name="Herschleb J."/>
            <person name="Runnheim R."/>
            <person name="Forrest D."/>
            <person name="Amos-Landgraf J."/>
            <person name="Schwartz D.C."/>
            <person name="Cheng Z."/>
            <person name="Lindblad-Toh K."/>
            <person name="Eichler E.E."/>
            <person name="Ponting C.P."/>
        </authorList>
    </citation>
    <scope>NUCLEOTIDE SEQUENCE [LARGE SCALE GENOMIC DNA]</scope>
    <source>
        <strain>C57BL/6J</strain>
    </source>
</reference>
<reference key="2">
    <citation type="journal article" date="2004" name="Genome Res.">
        <title>The status, quality, and expansion of the NIH full-length cDNA project: the Mammalian Gene Collection (MGC).</title>
        <authorList>
            <consortium name="The MGC Project Team"/>
        </authorList>
    </citation>
    <scope>NUCLEOTIDE SEQUENCE [LARGE SCALE MRNA]</scope>
</reference>
<reference key="3">
    <citation type="journal article" date="2005" name="Science">
        <title>The transcriptional landscape of the mammalian genome.</title>
        <authorList>
            <person name="Carninci P."/>
            <person name="Kasukawa T."/>
            <person name="Katayama S."/>
            <person name="Gough J."/>
            <person name="Frith M.C."/>
            <person name="Maeda N."/>
            <person name="Oyama R."/>
            <person name="Ravasi T."/>
            <person name="Lenhard B."/>
            <person name="Wells C."/>
            <person name="Kodzius R."/>
            <person name="Shimokawa K."/>
            <person name="Bajic V.B."/>
            <person name="Brenner S.E."/>
            <person name="Batalov S."/>
            <person name="Forrest A.R."/>
            <person name="Zavolan M."/>
            <person name="Davis M.J."/>
            <person name="Wilming L.G."/>
            <person name="Aidinis V."/>
            <person name="Allen J.E."/>
            <person name="Ambesi-Impiombato A."/>
            <person name="Apweiler R."/>
            <person name="Aturaliya R.N."/>
            <person name="Bailey T.L."/>
            <person name="Bansal M."/>
            <person name="Baxter L."/>
            <person name="Beisel K.W."/>
            <person name="Bersano T."/>
            <person name="Bono H."/>
            <person name="Chalk A.M."/>
            <person name="Chiu K.P."/>
            <person name="Choudhary V."/>
            <person name="Christoffels A."/>
            <person name="Clutterbuck D.R."/>
            <person name="Crowe M.L."/>
            <person name="Dalla E."/>
            <person name="Dalrymple B.P."/>
            <person name="de Bono B."/>
            <person name="Della Gatta G."/>
            <person name="di Bernardo D."/>
            <person name="Down T."/>
            <person name="Engstrom P."/>
            <person name="Fagiolini M."/>
            <person name="Faulkner G."/>
            <person name="Fletcher C.F."/>
            <person name="Fukushima T."/>
            <person name="Furuno M."/>
            <person name="Futaki S."/>
            <person name="Gariboldi M."/>
            <person name="Georgii-Hemming P."/>
            <person name="Gingeras T.R."/>
            <person name="Gojobori T."/>
            <person name="Green R.E."/>
            <person name="Gustincich S."/>
            <person name="Harbers M."/>
            <person name="Hayashi Y."/>
            <person name="Hensch T.K."/>
            <person name="Hirokawa N."/>
            <person name="Hill D."/>
            <person name="Huminiecki L."/>
            <person name="Iacono M."/>
            <person name="Ikeo K."/>
            <person name="Iwama A."/>
            <person name="Ishikawa T."/>
            <person name="Jakt M."/>
            <person name="Kanapin A."/>
            <person name="Katoh M."/>
            <person name="Kawasawa Y."/>
            <person name="Kelso J."/>
            <person name="Kitamura H."/>
            <person name="Kitano H."/>
            <person name="Kollias G."/>
            <person name="Krishnan S.P."/>
            <person name="Kruger A."/>
            <person name="Kummerfeld S.K."/>
            <person name="Kurochkin I.V."/>
            <person name="Lareau L.F."/>
            <person name="Lazarevic D."/>
            <person name="Lipovich L."/>
            <person name="Liu J."/>
            <person name="Liuni S."/>
            <person name="McWilliam S."/>
            <person name="Madan Babu M."/>
            <person name="Madera M."/>
            <person name="Marchionni L."/>
            <person name="Matsuda H."/>
            <person name="Matsuzawa S."/>
            <person name="Miki H."/>
            <person name="Mignone F."/>
            <person name="Miyake S."/>
            <person name="Morris K."/>
            <person name="Mottagui-Tabar S."/>
            <person name="Mulder N."/>
            <person name="Nakano N."/>
            <person name="Nakauchi H."/>
            <person name="Ng P."/>
            <person name="Nilsson R."/>
            <person name="Nishiguchi S."/>
            <person name="Nishikawa S."/>
            <person name="Nori F."/>
            <person name="Ohara O."/>
            <person name="Okazaki Y."/>
            <person name="Orlando V."/>
            <person name="Pang K.C."/>
            <person name="Pavan W.J."/>
            <person name="Pavesi G."/>
            <person name="Pesole G."/>
            <person name="Petrovsky N."/>
            <person name="Piazza S."/>
            <person name="Reed J."/>
            <person name="Reid J.F."/>
            <person name="Ring B.Z."/>
            <person name="Ringwald M."/>
            <person name="Rost B."/>
            <person name="Ruan Y."/>
            <person name="Salzberg S.L."/>
            <person name="Sandelin A."/>
            <person name="Schneider C."/>
            <person name="Schoenbach C."/>
            <person name="Sekiguchi K."/>
            <person name="Semple C.A."/>
            <person name="Seno S."/>
            <person name="Sessa L."/>
            <person name="Sheng Y."/>
            <person name="Shibata Y."/>
            <person name="Shimada H."/>
            <person name="Shimada K."/>
            <person name="Silva D."/>
            <person name="Sinclair B."/>
            <person name="Sperling S."/>
            <person name="Stupka E."/>
            <person name="Sugiura K."/>
            <person name="Sultana R."/>
            <person name="Takenaka Y."/>
            <person name="Taki K."/>
            <person name="Tammoja K."/>
            <person name="Tan S.L."/>
            <person name="Tang S."/>
            <person name="Taylor M.S."/>
            <person name="Tegner J."/>
            <person name="Teichmann S.A."/>
            <person name="Ueda H.R."/>
            <person name="van Nimwegen E."/>
            <person name="Verardo R."/>
            <person name="Wei C.L."/>
            <person name="Yagi K."/>
            <person name="Yamanishi H."/>
            <person name="Zabarovsky E."/>
            <person name="Zhu S."/>
            <person name="Zimmer A."/>
            <person name="Hide W."/>
            <person name="Bult C."/>
            <person name="Grimmond S.M."/>
            <person name="Teasdale R.D."/>
            <person name="Liu E.T."/>
            <person name="Brusic V."/>
            <person name="Quackenbush J."/>
            <person name="Wahlestedt C."/>
            <person name="Mattick J.S."/>
            <person name="Hume D.A."/>
            <person name="Kai C."/>
            <person name="Sasaki D."/>
            <person name="Tomaru Y."/>
            <person name="Fukuda S."/>
            <person name="Kanamori-Katayama M."/>
            <person name="Suzuki M."/>
            <person name="Aoki J."/>
            <person name="Arakawa T."/>
            <person name="Iida J."/>
            <person name="Imamura K."/>
            <person name="Itoh M."/>
            <person name="Kato T."/>
            <person name="Kawaji H."/>
            <person name="Kawagashira N."/>
            <person name="Kawashima T."/>
            <person name="Kojima M."/>
            <person name="Kondo S."/>
            <person name="Konno H."/>
            <person name="Nakano K."/>
            <person name="Ninomiya N."/>
            <person name="Nishio T."/>
            <person name="Okada M."/>
            <person name="Plessy C."/>
            <person name="Shibata K."/>
            <person name="Shiraki T."/>
            <person name="Suzuki S."/>
            <person name="Tagami M."/>
            <person name="Waki K."/>
            <person name="Watahiki A."/>
            <person name="Okamura-Oho Y."/>
            <person name="Suzuki H."/>
            <person name="Kawai J."/>
            <person name="Hayashizaki Y."/>
        </authorList>
    </citation>
    <scope>NUCLEOTIDE SEQUENCE [LARGE SCALE MRNA] OF 486-862</scope>
    <source>
        <strain>C57BL/6J</strain>
    </source>
</reference>
<reference key="4">
    <citation type="journal article" date="2010" name="J. Biol. Chem.">
        <title>SLC4A11 prevents osmotic imbalance leading to corneal endothelial dystrophy, deafness, and polyuria.</title>
        <authorList>
            <person name="Groger N."/>
            <person name="Frohlich H."/>
            <person name="Maier H."/>
            <person name="Olbrich A."/>
            <person name="Kostin S."/>
            <person name="Braun T."/>
            <person name="Boettger T."/>
        </authorList>
    </citation>
    <scope>FUNCTION</scope>
    <scope>DISRUPTION PHENOTYPE</scope>
    <scope>TISSUE SPECIFICITY</scope>
</reference>
<reference key="5">
    <citation type="journal article" date="2013" name="Hum. Mol. Genet.">
        <title>Transmembrane water-flux through SLC4A11: a route defective in genetic corneal diseases.</title>
        <authorList>
            <person name="Vilas G.L."/>
            <person name="Loganathan S.K."/>
            <person name="Liu J."/>
            <person name="Riau A.K."/>
            <person name="Young J.D."/>
            <person name="Mehta J.S."/>
            <person name="Vithana E.N."/>
            <person name="Casey J.R."/>
        </authorList>
    </citation>
    <scope>DISRUPTION PHENOTYPE</scope>
</reference>
<reference key="6">
    <citation type="journal article" date="2020" name="Commun. Biol.">
        <title>Borax induces osteogenesis by stimulating NaBC1 transporter via activation of BMP pathway.</title>
        <authorList>
            <person name="Rico P."/>
            <person name="Rodrigo-Navarro A."/>
            <person name="Sanchez Perez L."/>
            <person name="Salmeron-Sanchez M."/>
        </authorList>
    </citation>
    <scope>FUNCTION</scope>
</reference>
<keyword id="KW-0039">Anion exchange</keyword>
<keyword id="KW-1003">Cell membrane</keyword>
<keyword id="KW-0325">Glycoprotein</keyword>
<keyword id="KW-0406">Ion transport</keyword>
<keyword id="KW-0472">Membrane</keyword>
<keyword id="KW-1185">Reference proteome</keyword>
<keyword id="KW-0769">Symport</keyword>
<keyword id="KW-0812">Transmembrane</keyword>
<keyword id="KW-1133">Transmembrane helix</keyword>
<keyword id="KW-0813">Transport</keyword>
<sequence length="862" mass="96751">MSQNEHCQDSGEYFSAGTQGYFKNNMEDNLEVREDSLGDEVFDTVNSSIVSGESIRFFVNVNLEVQPSKSDLEAATGGCVLLHTSRKYLKLKNFEEEVRAHRDLDGFLAQASIILNETATSLDDVLRTMLNRFALDPNHAEPDCDLDLLMAKLFTDAGAPMESKVHLLSDTIQGVTATVRGVQYEQSWLCIICTMKTLQKRHVCISRLVRPQNWGENSCEVRFVILVLAPPKMKSTKTAMEVARTFATMFSDITFRQKLLKTRTEEEFKEALVHQRQLLTMMMPRAAGHSMSSLHTHRHPQPPKCKDFFPFGKGIWMDIMRRFPVYPMDFTDGIIGKSKSVGKYVTTTLFLYFACLLPTIAFGSLNDENTNGAIDVQKTIAGQSIGGLLYALFSGQPLVILLTTAPLAIYTQVIRVICDDYNLDFNAFYAWTGLWNSFFLALYAFLNLSLLMNLFKRSTEEIIALFISITFVLDAVKGMVKIFGKYYYGHHYHTKRTSSLVSLLGIGRSPNSSLHTALNASLLASPVEMATTSSPGSTHSGQATAVLSLLIMLGTLWLGYTLYQFKKSPYLHPCVRETLSDCALPIAVLSFSLIGSYGFQEIEMSKFRYNPSESLFEVAQIHSLSFKAIGSAMGLGFLLSLLFFIEQNLVAALVNAPENRLVKGTAYHWDLLLLAIINTGLSLFGLPWIHAAYPHSPLHVRALALVEERVENGHIYETIVDVKETRLTALGASVLVGLSLLLLPFPLQWIPKPVLYGLFLYIALTSLDGNQLFSRVALLLKEQTSYPPTHYIRRVPQRKIHYFTGLQILQLLLLCAFGMSSLPYMKMVFPLIMIAMIPIRYNLLPRIIEAKYLDVMDAEHRP</sequence>
<proteinExistence type="evidence at transcript level"/>
<comment type="function">
    <text evidence="1 3 5">Multifunctional transporter with an impact in cell morphology and differentiation (PubMed:20185830). In the presence of borate B(OH)4(-), acts as a voltage-dependent electrogenic Na(+)-coupled B(OH)4(-) cotransporter controlling boron homeostasis (By similarity). At early stages of stem cell differentiation, participates in synergy with ITGA5-ITGB1 and ITGAV-ITGB3 integrins and BMPR1A to promote cell adhesion and contractility that drives differentiation toward osteogenic commitment while inhibiting adipogenesis (PubMed:33247189). In the absence of B(OH)4(-), acts as a Na(+)-coupled OH(-) or H(+) permeable channel with implications in cellular redox balance. Regulates the oxidative stress response in corneal endothelium by enhancing antioxidant defenses and protecting cells from reactive oxygen species. In response to hypo-osmotic challenge, also acts as water permeable channel at the basolateral cell membrane of corneal endothelial cells and facilitates transendothelial fluid reabsorption in the aqueous humor. In the presence of ammonia, acts as an electrogenic NH3/H(+) cotransporter and may play a role in ammonia transport and reabsorption in renal Henle's loop epithelium (By similarity).</text>
</comment>
<comment type="catalytic activity">
    <reaction evidence="1">
        <text>tetrahydroxoborate(in) + 2 Na(+)(in) = tetrahydroxoborate(out) + 2 Na(+)(out)</text>
        <dbReference type="Rhea" id="RHEA:66816"/>
        <dbReference type="ChEBI" id="CHEBI:29101"/>
        <dbReference type="ChEBI" id="CHEBI:41132"/>
    </reaction>
    <physiologicalReaction direction="left-to-right" evidence="1">
        <dbReference type="Rhea" id="RHEA:66817"/>
    </physiologicalReaction>
</comment>
<comment type="subunit">
    <text evidence="1">Homodimer.</text>
</comment>
<comment type="subcellular location">
    <subcellularLocation>
        <location evidence="1">Cell membrane</location>
        <topology evidence="2">Multi-pass membrane protein</topology>
    </subcellularLocation>
    <subcellularLocation>
        <location evidence="1">Basolateral cell membrane</location>
        <topology evidence="2">Multi-pass membrane protein</topology>
    </subcellularLocation>
</comment>
<comment type="tissue specificity">
    <text evidence="3">Expressed in the endothelial cells of the cornea. In the inner ear, is located in fibrocytes underlying the stria vascularis. In the kidney, is expressed in the thin descending limb of Henle loop.</text>
</comment>
<comment type="PTM">
    <text evidence="1">Glycosylated.</text>
</comment>
<comment type="disruption phenotype">
    <text evidence="3 4">Mutant mice show corneal defects characterized by progressive thickening of the stroma and descement membrane concomitant with increased sodium chloride concentration in the stroma (PubMed:20185830, PubMed:23813972). They show impaired urinary concentration, increased urinary volume, and increased urinary sodium loss in the kidney. They also show stress-induced morphological changes of fibrocytes of the inner ear resulting in deafness.</text>
</comment>
<comment type="similarity">
    <text evidence="6">Belongs to the anion exchanger (TC 2.A.31) family.</text>
</comment>